<organism>
    <name type="scientific">Danio rerio</name>
    <name type="common">Zebrafish</name>
    <name type="synonym">Brachydanio rerio</name>
    <dbReference type="NCBI Taxonomy" id="7955"/>
    <lineage>
        <taxon>Eukaryota</taxon>
        <taxon>Metazoa</taxon>
        <taxon>Chordata</taxon>
        <taxon>Craniata</taxon>
        <taxon>Vertebrata</taxon>
        <taxon>Euteleostomi</taxon>
        <taxon>Actinopterygii</taxon>
        <taxon>Neopterygii</taxon>
        <taxon>Teleostei</taxon>
        <taxon>Ostariophysi</taxon>
        <taxon>Cypriniformes</taxon>
        <taxon>Danionidae</taxon>
        <taxon>Danioninae</taxon>
        <taxon>Danio</taxon>
    </lineage>
</organism>
<name>EGR1_DANRE</name>
<gene>
    <name type="primary">egr1</name>
    <name type="synonym">krox24</name>
</gene>
<evidence type="ECO:0000250" key="1">
    <source>
        <dbReference type="UniProtKB" id="P08046"/>
    </source>
</evidence>
<evidence type="ECO:0000250" key="2">
    <source>
        <dbReference type="UniProtKB" id="P18146"/>
    </source>
</evidence>
<evidence type="ECO:0000255" key="3">
    <source>
        <dbReference type="PROSITE-ProRule" id="PRU00042"/>
    </source>
</evidence>
<evidence type="ECO:0000256" key="4">
    <source>
        <dbReference type="SAM" id="MobiDB-lite"/>
    </source>
</evidence>
<evidence type="ECO:0000269" key="5">
    <source>
    </source>
</evidence>
<evidence type="ECO:0000269" key="6">
    <source>
    </source>
</evidence>
<evidence type="ECO:0000305" key="7"/>
<comment type="function">
    <text evidence="1 2 5 6">Transcriptional regulator (PubMed:7945937). Recognizes and binds to the DNA sequence 5'-GCG(T/G)GGGCG-3'(EGR-site) in the promoter region of target genes (By similarity). Binds double-stranded target DNA, irrespective of the cytosine methylation status (By similarity). Regulates the transcription of numerous target genes, and thereby plays an important role in regulating the response to growth factors, DNA damage, and ischemia. Plays a role in the regulation of cell survival, proliferation and cell death. Mediates responses to ischemia and hypoxia; regulates the expression of proteins that are involved in inflammatory processes (By similarity). Plays a role in regulating the expression of circadian clock genes (By similarity). Plays a role in the organization of Muller glia cells in the inner and outer plexiform layers of the retina (PubMed:30924555).</text>
</comment>
<comment type="subcellular location">
    <subcellularLocation>
        <location evidence="2">Nucleus</location>
    </subcellularLocation>
    <subcellularLocation>
        <location evidence="2">Cytoplasm</location>
    </subcellularLocation>
</comment>
<comment type="tissue specificity">
    <text evidence="6">Detected in muscle and brain.</text>
</comment>
<comment type="developmental stage">
    <text evidence="5">Abundantly expressed in the eye at 96 hpf.</text>
</comment>
<comment type="domain">
    <text evidence="2">Binds to DNA motifs with the sequence 5'-GCG(T/G)GGGCG-3' via its C2H2-type zinc fingers. The first, most N-terminal zinc finger binds to the 3'-GCG motif, the middle zinc finger interacts with the central TGG motif, and the C-terminal zinc finger binds to the 5'-GCG motif. Binds double-stranded target DNA, irrespective of the cytosine methylation status. Has reduced affinity for target DNA where the cytosines have been oxidized to 5-hydroxymethylcytosine. Does not bind target DNA where the cytosines have been oxidized to 5-formylcytosine or 5-carboxylcytosine.</text>
</comment>
<comment type="disruption phenotype">
    <text evidence="5">Knockouts show subtle abnormalities in the inner plexiform layer, outer plexiform layer and Muller Glia cell tiling.</text>
</comment>
<comment type="similarity">
    <text evidence="7">Belongs to the EGR C2H2-type zinc-finger protein family.</text>
</comment>
<accession>P26632</accession>
<feature type="chain" id="PRO_0000047116" description="Early growth response protein 1">
    <location>
        <begin position="1"/>
        <end position="511"/>
    </location>
</feature>
<feature type="zinc finger region" description="C2H2-type 1" evidence="3">
    <location>
        <begin position="311"/>
        <end position="335"/>
    </location>
</feature>
<feature type="zinc finger region" description="C2H2-type 2" evidence="3">
    <location>
        <begin position="341"/>
        <end position="363"/>
    </location>
</feature>
<feature type="zinc finger region" description="C2H2-type 3" evidence="3">
    <location>
        <begin position="369"/>
        <end position="391"/>
    </location>
</feature>
<feature type="region of interest" description="Disordered" evidence="4">
    <location>
        <begin position="133"/>
        <end position="169"/>
    </location>
</feature>
<feature type="region of interest" description="Disordered" evidence="4">
    <location>
        <begin position="291"/>
        <end position="312"/>
    </location>
</feature>
<feature type="region of interest" description="Disordered" evidence="4">
    <location>
        <begin position="384"/>
        <end position="406"/>
    </location>
</feature>
<feature type="compositionally biased region" description="Low complexity" evidence="4">
    <location>
        <begin position="137"/>
        <end position="169"/>
    </location>
</feature>
<feature type="compositionally biased region" description="Basic residues" evidence="4">
    <location>
        <begin position="386"/>
        <end position="396"/>
    </location>
</feature>
<feature type="site" description="Interaction with DNA" evidence="2">
    <location>
        <position position="309"/>
    </location>
</feature>
<feature type="site" description="Interaction with DNA" evidence="1">
    <location>
        <position position="320"/>
    </location>
</feature>
<feature type="site" description="Interaction with DNA" evidence="1">
    <location>
        <position position="324"/>
    </location>
</feature>
<feature type="site" description="Interaction with DNA" evidence="2">
    <location>
        <position position="330"/>
    </location>
</feature>
<feature type="site" description="Interaction with DNA" evidence="1">
    <location>
        <position position="348"/>
    </location>
</feature>
<feature type="site" description="Interaction with DNA" evidence="2">
    <location>
        <position position="352"/>
    </location>
</feature>
<feature type="site" description="Interaction with DNA" evidence="2">
    <location>
        <position position="376"/>
    </location>
</feature>
<feature type="site" description="Interaction with DNA" evidence="2">
    <location>
        <position position="380"/>
    </location>
</feature>
<feature type="site" description="Interaction with DNA" evidence="2">
    <location>
        <position position="386"/>
    </location>
</feature>
<feature type="sequence conflict" description="In Ref. 2; AAA50035." evidence="7" ref="2">
    <original>T</original>
    <variation>S</variation>
    <location>
        <position position="317"/>
    </location>
</feature>
<feature type="sequence conflict" description="In Ref. 2; AAA50035." evidence="7" ref="2">
    <original>R</original>
    <variation>S</variation>
    <location>
        <position position="320"/>
    </location>
</feature>
<feature type="sequence conflict" description="In Ref. 2; AAA50035." evidence="7" ref="2">
    <original>S</original>
    <variation>R</variation>
    <location>
        <position position="351"/>
    </location>
</feature>
<feature type="sequence conflict" description="In Ref. 2; AAA50035." evidence="7" ref="2">
    <original>E</original>
    <variation>D</variation>
    <location>
        <position position="372"/>
    </location>
</feature>
<dbReference type="EMBL" id="U12895">
    <property type="protein sequence ID" value="AAA63651.1"/>
    <property type="molecule type" value="Genomic_DNA"/>
</dbReference>
<dbReference type="EMBL" id="M81109">
    <property type="protein sequence ID" value="AAA50035.1"/>
    <property type="molecule type" value="Genomic_DNA"/>
</dbReference>
<dbReference type="PIR" id="I50114">
    <property type="entry name" value="I50114"/>
</dbReference>
<dbReference type="PIR" id="PQ0233">
    <property type="entry name" value="PQ0233"/>
</dbReference>
<dbReference type="RefSeq" id="NP_571323.1">
    <property type="nucleotide sequence ID" value="NM_131248.1"/>
</dbReference>
<dbReference type="SMR" id="P26632"/>
<dbReference type="FunCoup" id="P26632">
    <property type="interactions" value="680"/>
</dbReference>
<dbReference type="STRING" id="7955.ENSDARP00000054459"/>
<dbReference type="PaxDb" id="7955-ENSDARP00000054459"/>
<dbReference type="Ensembl" id="ENSDART00000054460">
    <property type="protein sequence ID" value="ENSDARP00000054459"/>
    <property type="gene ID" value="ENSDARG00000037421"/>
</dbReference>
<dbReference type="Ensembl" id="ENSDART00000183884">
    <property type="protein sequence ID" value="ENSDARP00000151657"/>
    <property type="gene ID" value="ENSDARG00000115563"/>
</dbReference>
<dbReference type="GeneID" id="30498"/>
<dbReference type="KEGG" id="dre:30498"/>
<dbReference type="AGR" id="ZFIN:ZDB-GENE-980526-320"/>
<dbReference type="CTD" id="1958"/>
<dbReference type="ZFIN" id="ZDB-GENE-980526-320">
    <property type="gene designation" value="egr1"/>
</dbReference>
<dbReference type="eggNOG" id="KOG1721">
    <property type="taxonomic scope" value="Eukaryota"/>
</dbReference>
<dbReference type="HOGENOM" id="CLU_043235_2_0_1"/>
<dbReference type="InParanoid" id="P26632"/>
<dbReference type="OMA" id="NFQVPMI"/>
<dbReference type="OrthoDB" id="10018191at2759"/>
<dbReference type="PhylomeDB" id="P26632"/>
<dbReference type="TreeFam" id="TF318980"/>
<dbReference type="PRO" id="PR:P26632"/>
<dbReference type="Proteomes" id="UP000000437">
    <property type="component" value="Alternate scaffold 14"/>
</dbReference>
<dbReference type="Proteomes" id="UP000000437">
    <property type="component" value="Chromosome 14"/>
</dbReference>
<dbReference type="Bgee" id="ENSDARG00000037421">
    <property type="expression patterns" value="Expressed in granulocyte and 19 other cell types or tissues"/>
</dbReference>
<dbReference type="ExpressionAtlas" id="P26632">
    <property type="expression patterns" value="baseline and differential"/>
</dbReference>
<dbReference type="GO" id="GO:0005737">
    <property type="term" value="C:cytoplasm"/>
    <property type="evidence" value="ECO:0000250"/>
    <property type="project" value="UniProtKB"/>
</dbReference>
<dbReference type="GO" id="GO:0005634">
    <property type="term" value="C:nucleus"/>
    <property type="evidence" value="ECO:0000250"/>
    <property type="project" value="UniProtKB"/>
</dbReference>
<dbReference type="GO" id="GO:0000981">
    <property type="term" value="F:DNA-binding transcription factor activity, RNA polymerase II-specific"/>
    <property type="evidence" value="ECO:0000318"/>
    <property type="project" value="GO_Central"/>
</dbReference>
<dbReference type="GO" id="GO:0010385">
    <property type="term" value="F:double-stranded methylated DNA binding"/>
    <property type="evidence" value="ECO:0000250"/>
    <property type="project" value="UniProtKB"/>
</dbReference>
<dbReference type="GO" id="GO:0044729">
    <property type="term" value="F:hemi-methylated DNA-binding"/>
    <property type="evidence" value="ECO:0000250"/>
    <property type="project" value="UniProtKB"/>
</dbReference>
<dbReference type="GO" id="GO:1990841">
    <property type="term" value="F:promoter-specific chromatin binding"/>
    <property type="evidence" value="ECO:0000250"/>
    <property type="project" value="UniProtKB"/>
</dbReference>
<dbReference type="GO" id="GO:0000978">
    <property type="term" value="F:RNA polymerase II cis-regulatory region sequence-specific DNA binding"/>
    <property type="evidence" value="ECO:0000318"/>
    <property type="project" value="GO_Central"/>
</dbReference>
<dbReference type="GO" id="GO:0043565">
    <property type="term" value="F:sequence-specific DNA binding"/>
    <property type="evidence" value="ECO:0000250"/>
    <property type="project" value="UniProtKB"/>
</dbReference>
<dbReference type="GO" id="GO:0008270">
    <property type="term" value="F:zinc ion binding"/>
    <property type="evidence" value="ECO:0000250"/>
    <property type="project" value="UniProtKB"/>
</dbReference>
<dbReference type="GO" id="GO:0043010">
    <property type="term" value="P:camera-type eye development"/>
    <property type="evidence" value="ECO:0000315"/>
    <property type="project" value="ZFIN"/>
</dbReference>
<dbReference type="GO" id="GO:0032922">
    <property type="term" value="P:circadian regulation of gene expression"/>
    <property type="evidence" value="ECO:0000250"/>
    <property type="project" value="UniProtKB"/>
</dbReference>
<dbReference type="GO" id="GO:0060059">
    <property type="term" value="P:embryonic retina morphogenesis in camera-type eye"/>
    <property type="evidence" value="ECO:0000315"/>
    <property type="project" value="ZFIN"/>
</dbReference>
<dbReference type="GO" id="GO:0048703">
    <property type="term" value="P:embryonic viscerocranium morphogenesis"/>
    <property type="evidence" value="ECO:0000315"/>
    <property type="project" value="ZFIN"/>
</dbReference>
<dbReference type="GO" id="GO:0045893">
    <property type="term" value="P:positive regulation of DNA-templated transcription"/>
    <property type="evidence" value="ECO:0000250"/>
    <property type="project" value="UniProtKB"/>
</dbReference>
<dbReference type="GO" id="GO:0045944">
    <property type="term" value="P:positive regulation of transcription by RNA polymerase II"/>
    <property type="evidence" value="ECO:0000250"/>
    <property type="project" value="UniProtKB"/>
</dbReference>
<dbReference type="GO" id="GO:0006357">
    <property type="term" value="P:regulation of transcription by RNA polymerase II"/>
    <property type="evidence" value="ECO:0000318"/>
    <property type="project" value="GO_Central"/>
</dbReference>
<dbReference type="GO" id="GO:0010842">
    <property type="term" value="P:retina layer formation"/>
    <property type="evidence" value="ECO:0000315"/>
    <property type="project" value="UniProtKB"/>
</dbReference>
<dbReference type="FunFam" id="3.30.160.60:FF:000769">
    <property type="entry name" value="Early growth response 2b"/>
    <property type="match status" value="1"/>
</dbReference>
<dbReference type="FunFam" id="3.30.160.60:FF:000324">
    <property type="entry name" value="Early growth response protein 4"/>
    <property type="match status" value="1"/>
</dbReference>
<dbReference type="FunFam" id="3.30.160.60:FF:000419">
    <property type="entry name" value="Early growth response protein 4"/>
    <property type="match status" value="1"/>
</dbReference>
<dbReference type="Gene3D" id="3.30.160.60">
    <property type="entry name" value="Classic Zinc Finger"/>
    <property type="match status" value="3"/>
</dbReference>
<dbReference type="InterPro" id="IPR021839">
    <property type="entry name" value="EGR1_C"/>
</dbReference>
<dbReference type="InterPro" id="IPR021849">
    <property type="entry name" value="EGR_N"/>
</dbReference>
<dbReference type="InterPro" id="IPR036236">
    <property type="entry name" value="Znf_C2H2_sf"/>
</dbReference>
<dbReference type="InterPro" id="IPR013087">
    <property type="entry name" value="Znf_C2H2_type"/>
</dbReference>
<dbReference type="PANTHER" id="PTHR23235:SF42">
    <property type="entry name" value="EARLY GROWTH RESPONSE PROTEIN 1"/>
    <property type="match status" value="1"/>
</dbReference>
<dbReference type="PANTHER" id="PTHR23235">
    <property type="entry name" value="KRUEPPEL-LIKE TRANSCRIPTION FACTOR"/>
    <property type="match status" value="1"/>
</dbReference>
<dbReference type="Pfam" id="PF11914">
    <property type="entry name" value="DUF3432"/>
    <property type="match status" value="1"/>
</dbReference>
<dbReference type="Pfam" id="PF11928">
    <property type="entry name" value="DUF3446"/>
    <property type="match status" value="1"/>
</dbReference>
<dbReference type="Pfam" id="PF00096">
    <property type="entry name" value="zf-C2H2"/>
    <property type="match status" value="3"/>
</dbReference>
<dbReference type="SMART" id="SM00355">
    <property type="entry name" value="ZnF_C2H2"/>
    <property type="match status" value="3"/>
</dbReference>
<dbReference type="SUPFAM" id="SSF57667">
    <property type="entry name" value="beta-beta-alpha zinc fingers"/>
    <property type="match status" value="2"/>
</dbReference>
<dbReference type="PROSITE" id="PS00028">
    <property type="entry name" value="ZINC_FINGER_C2H2_1"/>
    <property type="match status" value="3"/>
</dbReference>
<dbReference type="PROSITE" id="PS50157">
    <property type="entry name" value="ZINC_FINGER_C2H2_2"/>
    <property type="match status" value="3"/>
</dbReference>
<sequence>MAAAKTEMLLPALQISDPLSFPHSPTDNYPKLEEMIMLNSAGTPFLNATAPEGAVFGSGEPGEQFDHLAGDTLSEISMEKPLSDQTYSTQRLPPISYTGRFTLEPATNCSNSLWAEPLFSLVSGLVGINPPPASIPSSTSQATHPSSSSTSSIPSSSSSSTSSASLSCSVHQSEPNPIYSAAPTYSSASPDIFPESGPNFSTTVGTSLQYSSSTYPSAKTCNPSFSVPMIPDYLFTQQQSEISLVPPDQKPIQTQAGQQPALTPLHTIKAFATQTGSQDLKSVYQSQLIKPSRMRKYPNRPSKTPPHERPYACPVETCDRRFSRSDELTRHIRIHTGQKPFQCRICMRNFSRSDHLTTHIRTHTGEKPFACEICGRKFARSDERKRHTKIHMRQKDKKAEKGATAAVQSSVSNISISASSPVSSYPSPITSYPSPVSSFPSPVNSCYSSPVHTSYPSPSIATTYPSATSTFQTQVATSFPTSVASNIYSSPVTTPLPDMQSALSPRTADIC</sequence>
<keyword id="KW-0010">Activator</keyword>
<keyword id="KW-0090">Biological rhythms</keyword>
<keyword id="KW-0963">Cytoplasm</keyword>
<keyword id="KW-0238">DNA-binding</keyword>
<keyword id="KW-0479">Metal-binding</keyword>
<keyword id="KW-0539">Nucleus</keyword>
<keyword id="KW-1185">Reference proteome</keyword>
<keyword id="KW-0677">Repeat</keyword>
<keyword id="KW-0804">Transcription</keyword>
<keyword id="KW-0805">Transcription regulation</keyword>
<keyword id="KW-0862">Zinc</keyword>
<keyword id="KW-0863">Zinc-finger</keyword>
<proteinExistence type="evidence at transcript level"/>
<reference key="1">
    <citation type="journal article" date="1994" name="DNA Cell Biol.">
        <title>The zebrafish egr1 gene encodes a highly conserved, zinc-finger transcriptional regulator.</title>
        <authorList>
            <person name="Drummond I.A."/>
            <person name="Rohwer-Nutter P."/>
            <person name="Sukhatme V.P."/>
        </authorList>
    </citation>
    <scope>NUCLEOTIDE SEQUENCE [GENOMIC DNA]</scope>
    <scope>FUNCTION</scope>
    <scope>TISSUE SPECIFICITY</scope>
</reference>
<reference key="2">
    <citation type="journal article" date="1991" name="Biochem. Biophys. Res. Commun.">
        <title>Cloning of fish zinc-finger genes related to Krox-20 and Krox-24.</title>
        <authorList>
            <person name="Lanfear J."/>
            <person name="Jowett T."/>
            <person name="Holland P.W."/>
        </authorList>
    </citation>
    <scope>NUCLEOTIDE SEQUENCE [GENOMIC DNA] OF 315-376</scope>
</reference>
<reference key="3">
    <citation type="journal article" date="2019" name="Glia">
        <title>Genetic control of cellular morphogenesis in Mueller glia.</title>
        <authorList>
            <person name="Charlton-Perkins M."/>
            <person name="Almeida A.D."/>
            <person name="MacDonald R.B."/>
            <person name="Harris W.A."/>
        </authorList>
    </citation>
    <scope>FUNCTION</scope>
    <scope>DEVELOPMENTAL STAGE</scope>
    <scope>DISRUPTION PHENOTYPE</scope>
</reference>
<protein>
    <recommendedName>
        <fullName>Early growth response protein 1</fullName>
        <shortName>EGR-1</shortName>
    </recommendedName>
    <alternativeName>
        <fullName>Zinc finger protein Krox-24</fullName>
    </alternativeName>
</protein>